<organism>
    <name type="scientific">Yarrowia lipolytica (strain CLIB 122 / E 150)</name>
    <name type="common">Yeast</name>
    <name type="synonym">Candida lipolytica</name>
    <dbReference type="NCBI Taxonomy" id="284591"/>
    <lineage>
        <taxon>Eukaryota</taxon>
        <taxon>Fungi</taxon>
        <taxon>Dikarya</taxon>
        <taxon>Ascomycota</taxon>
        <taxon>Saccharomycotina</taxon>
        <taxon>Dipodascomycetes</taxon>
        <taxon>Dipodascales</taxon>
        <taxon>Dipodascales incertae sedis</taxon>
        <taxon>Yarrowia</taxon>
    </lineage>
</organism>
<feature type="chain" id="PRO_0000365993" description="Eukaryotic translation initiation factor 3 subunit E">
    <location>
        <begin position="1"/>
        <end position="421"/>
    </location>
</feature>
<feature type="domain" description="PCI" evidence="2">
    <location>
        <begin position="215"/>
        <end position="394"/>
    </location>
</feature>
<sequence>MEYDLTQKTLPFLDRHLIYPLLQFLKGRGVYNDTELLQLEYDLLKDTNMTDYLVELSKELGQNDADLQAKKENVVKTLAELEEATKPVFEVLENPEVVSELKENKTQNQALLTSKYGLSVEQINLLYKFGQFQYNAGRYQAASDILYHFRALSTDPELVASATWGRFACEILTSQWDSVLEELGKLRDSVDSRSLDPQQQLHQRMWVIHWSLFPFFQNDTKGKDALCDLFFSSSYISTIQAACPWILRYLVVAVIAGGHPHTASVFQKRLKDLVRVVGQEEYEYQDPLTRFVKSLYIDYSFEDAQNQLADCEKVLKQDFFLADSADAFLESARKLMSQVYCRVHQRVDIAQLSQTLNLSQEQGEKWIANLIKDSRMDAKIDESDSTVILNHPSVSVYQQVIEKTKGLTFRSSQVLNQGVTI</sequence>
<comment type="function">
    <text evidence="1">Component of the eukaryotic translation initiation factor 3 (eIF-3) complex, which is involved in protein synthesis of a specialized repertoire of mRNAs and, together with other initiation factors, stimulates binding of mRNA and methionyl-tRNAi to the 40S ribosome. The eIF-3 complex specifically targets and initiates translation of a subset of mRNAs involved in cell proliferation.</text>
</comment>
<comment type="subunit">
    <text evidence="1">Component of the eukaryotic translation initiation factor 3 (eIF-3) complex.</text>
</comment>
<comment type="subcellular location">
    <subcellularLocation>
        <location evidence="1">Cytoplasm</location>
    </subcellularLocation>
</comment>
<comment type="similarity">
    <text evidence="1">Belongs to the eIF-3 subunit E family.</text>
</comment>
<protein>
    <recommendedName>
        <fullName evidence="1">Eukaryotic translation initiation factor 3 subunit E</fullName>
        <shortName evidence="1">eIF3e</shortName>
    </recommendedName>
</protein>
<proteinExistence type="inferred from homology"/>
<name>EIF3E_YARLI</name>
<accession>Q6C0Q2</accession>
<keyword id="KW-0963">Cytoplasm</keyword>
<keyword id="KW-0396">Initiation factor</keyword>
<keyword id="KW-0648">Protein biosynthesis</keyword>
<keyword id="KW-1185">Reference proteome</keyword>
<evidence type="ECO:0000255" key="1">
    <source>
        <dbReference type="HAMAP-Rule" id="MF_03004"/>
    </source>
</evidence>
<evidence type="ECO:0000255" key="2">
    <source>
        <dbReference type="PROSITE-ProRule" id="PRU01185"/>
    </source>
</evidence>
<gene>
    <name evidence="1" type="primary">INT6</name>
    <name type="ordered locus">YALI0F22671g</name>
</gene>
<dbReference type="EMBL" id="CR382132">
    <property type="protein sequence ID" value="CAG78571.1"/>
    <property type="molecule type" value="Genomic_DNA"/>
</dbReference>
<dbReference type="RefSeq" id="XP_505760.1">
    <property type="nucleotide sequence ID" value="XM_505760.1"/>
</dbReference>
<dbReference type="SMR" id="Q6C0Q2"/>
<dbReference type="STRING" id="284591.Q6C0Q2"/>
<dbReference type="EnsemblFungi" id="CAG78571">
    <property type="protein sequence ID" value="CAG78571"/>
    <property type="gene ID" value="YALI0_F22671g"/>
</dbReference>
<dbReference type="KEGG" id="yli:2908806"/>
<dbReference type="VEuPathDB" id="FungiDB:YALI0_F22671g"/>
<dbReference type="HOGENOM" id="CLU_031132_0_0_1"/>
<dbReference type="InParanoid" id="Q6C0Q2"/>
<dbReference type="OMA" id="NCPWILR"/>
<dbReference type="OrthoDB" id="6477at4891"/>
<dbReference type="Proteomes" id="UP000001300">
    <property type="component" value="Chromosome F"/>
</dbReference>
<dbReference type="GO" id="GO:0005829">
    <property type="term" value="C:cytosol"/>
    <property type="evidence" value="ECO:0007669"/>
    <property type="project" value="EnsemblFungi"/>
</dbReference>
<dbReference type="GO" id="GO:0016282">
    <property type="term" value="C:eukaryotic 43S preinitiation complex"/>
    <property type="evidence" value="ECO:0007669"/>
    <property type="project" value="UniProtKB-UniRule"/>
</dbReference>
<dbReference type="GO" id="GO:0033290">
    <property type="term" value="C:eukaryotic 48S preinitiation complex"/>
    <property type="evidence" value="ECO:0007669"/>
    <property type="project" value="UniProtKB-UniRule"/>
</dbReference>
<dbReference type="GO" id="GO:0005852">
    <property type="term" value="C:eukaryotic translation initiation factor 3 complex"/>
    <property type="evidence" value="ECO:0000318"/>
    <property type="project" value="GO_Central"/>
</dbReference>
<dbReference type="GO" id="GO:0071540">
    <property type="term" value="C:eukaryotic translation initiation factor 3 complex, eIF3e"/>
    <property type="evidence" value="ECO:0007669"/>
    <property type="project" value="UniProtKB-UniRule"/>
</dbReference>
<dbReference type="GO" id="GO:0005634">
    <property type="term" value="C:nucleus"/>
    <property type="evidence" value="ECO:0000318"/>
    <property type="project" value="GO_Central"/>
</dbReference>
<dbReference type="GO" id="GO:0008541">
    <property type="term" value="C:proteasome regulatory particle, lid subcomplex"/>
    <property type="evidence" value="ECO:0007669"/>
    <property type="project" value="UniProtKB-ARBA"/>
</dbReference>
<dbReference type="GO" id="GO:0003743">
    <property type="term" value="F:translation initiation factor activity"/>
    <property type="evidence" value="ECO:0007669"/>
    <property type="project" value="UniProtKB-UniRule"/>
</dbReference>
<dbReference type="GO" id="GO:0070196">
    <property type="term" value="P:eukaryotic translation initiation factor 3 complex assembly"/>
    <property type="evidence" value="ECO:0007669"/>
    <property type="project" value="EnsemblFungi"/>
</dbReference>
<dbReference type="GO" id="GO:0001732">
    <property type="term" value="P:formation of cytoplasmic translation initiation complex"/>
    <property type="evidence" value="ECO:0007669"/>
    <property type="project" value="UniProtKB-UniRule"/>
</dbReference>
<dbReference type="GO" id="GO:0006413">
    <property type="term" value="P:translational initiation"/>
    <property type="evidence" value="ECO:0000318"/>
    <property type="project" value="GO_Central"/>
</dbReference>
<dbReference type="CDD" id="cd21378">
    <property type="entry name" value="eIF3E"/>
    <property type="match status" value="1"/>
</dbReference>
<dbReference type="Gene3D" id="1.25.40.570">
    <property type="match status" value="1"/>
</dbReference>
<dbReference type="HAMAP" id="MF_03004">
    <property type="entry name" value="eIF3e"/>
    <property type="match status" value="1"/>
</dbReference>
<dbReference type="InterPro" id="IPR016650">
    <property type="entry name" value="eIF3e"/>
</dbReference>
<dbReference type="InterPro" id="IPR019010">
    <property type="entry name" value="eIF3e_N"/>
</dbReference>
<dbReference type="InterPro" id="IPR000717">
    <property type="entry name" value="PCI_dom"/>
</dbReference>
<dbReference type="InterPro" id="IPR036390">
    <property type="entry name" value="WH_DNA-bd_sf"/>
</dbReference>
<dbReference type="PANTHER" id="PTHR10317">
    <property type="entry name" value="EUKARYOTIC TRANSLATION INITIATION FACTOR 3 SUBUNIT E"/>
    <property type="match status" value="1"/>
</dbReference>
<dbReference type="Pfam" id="PF09440">
    <property type="entry name" value="eIF3_N"/>
    <property type="match status" value="1"/>
</dbReference>
<dbReference type="Pfam" id="PF21357">
    <property type="entry name" value="EIF3E_C"/>
    <property type="match status" value="1"/>
</dbReference>
<dbReference type="Pfam" id="PF01399">
    <property type="entry name" value="PCI"/>
    <property type="match status" value="1"/>
</dbReference>
<dbReference type="PIRSF" id="PIRSF016255">
    <property type="entry name" value="eIF3e_su6"/>
    <property type="match status" value="1"/>
</dbReference>
<dbReference type="SMART" id="SM01186">
    <property type="entry name" value="eIF3_N"/>
    <property type="match status" value="1"/>
</dbReference>
<dbReference type="SMART" id="SM00088">
    <property type="entry name" value="PINT"/>
    <property type="match status" value="1"/>
</dbReference>
<dbReference type="SUPFAM" id="SSF46785">
    <property type="entry name" value="Winged helix' DNA-binding domain"/>
    <property type="match status" value="1"/>
</dbReference>
<dbReference type="PROSITE" id="PS50250">
    <property type="entry name" value="PCI"/>
    <property type="match status" value="1"/>
</dbReference>
<reference key="1">
    <citation type="journal article" date="2004" name="Nature">
        <title>Genome evolution in yeasts.</title>
        <authorList>
            <person name="Dujon B."/>
            <person name="Sherman D."/>
            <person name="Fischer G."/>
            <person name="Durrens P."/>
            <person name="Casaregola S."/>
            <person name="Lafontaine I."/>
            <person name="de Montigny J."/>
            <person name="Marck C."/>
            <person name="Neuveglise C."/>
            <person name="Talla E."/>
            <person name="Goffard N."/>
            <person name="Frangeul L."/>
            <person name="Aigle M."/>
            <person name="Anthouard V."/>
            <person name="Babour A."/>
            <person name="Barbe V."/>
            <person name="Barnay S."/>
            <person name="Blanchin S."/>
            <person name="Beckerich J.-M."/>
            <person name="Beyne E."/>
            <person name="Bleykasten C."/>
            <person name="Boisrame A."/>
            <person name="Boyer J."/>
            <person name="Cattolico L."/>
            <person name="Confanioleri F."/>
            <person name="de Daruvar A."/>
            <person name="Despons L."/>
            <person name="Fabre E."/>
            <person name="Fairhead C."/>
            <person name="Ferry-Dumazet H."/>
            <person name="Groppi A."/>
            <person name="Hantraye F."/>
            <person name="Hennequin C."/>
            <person name="Jauniaux N."/>
            <person name="Joyet P."/>
            <person name="Kachouri R."/>
            <person name="Kerrest A."/>
            <person name="Koszul R."/>
            <person name="Lemaire M."/>
            <person name="Lesur I."/>
            <person name="Ma L."/>
            <person name="Muller H."/>
            <person name="Nicaud J.-M."/>
            <person name="Nikolski M."/>
            <person name="Oztas S."/>
            <person name="Ozier-Kalogeropoulos O."/>
            <person name="Pellenz S."/>
            <person name="Potier S."/>
            <person name="Richard G.-F."/>
            <person name="Straub M.-L."/>
            <person name="Suleau A."/>
            <person name="Swennen D."/>
            <person name="Tekaia F."/>
            <person name="Wesolowski-Louvel M."/>
            <person name="Westhof E."/>
            <person name="Wirth B."/>
            <person name="Zeniou-Meyer M."/>
            <person name="Zivanovic Y."/>
            <person name="Bolotin-Fukuhara M."/>
            <person name="Thierry A."/>
            <person name="Bouchier C."/>
            <person name="Caudron B."/>
            <person name="Scarpelli C."/>
            <person name="Gaillardin C."/>
            <person name="Weissenbach J."/>
            <person name="Wincker P."/>
            <person name="Souciet J.-L."/>
        </authorList>
    </citation>
    <scope>NUCLEOTIDE SEQUENCE [LARGE SCALE GENOMIC DNA]</scope>
    <source>
        <strain>CLIB 122 / E 150</strain>
    </source>
</reference>